<organism>
    <name type="scientific">Chlorobium luteolum (strain DSM 273 / BCRC 81028 / 2530)</name>
    <name type="common">Pelodictyon luteolum</name>
    <dbReference type="NCBI Taxonomy" id="319225"/>
    <lineage>
        <taxon>Bacteria</taxon>
        <taxon>Pseudomonadati</taxon>
        <taxon>Chlorobiota</taxon>
        <taxon>Chlorobiia</taxon>
        <taxon>Chlorobiales</taxon>
        <taxon>Chlorobiaceae</taxon>
        <taxon>Chlorobium/Pelodictyon group</taxon>
        <taxon>Pelodictyon</taxon>
    </lineage>
</organism>
<name>TSAD_CHLL3</name>
<protein>
    <recommendedName>
        <fullName evidence="1">tRNA N6-adenosine threonylcarbamoyltransferase</fullName>
        <ecNumber evidence="1">2.3.1.234</ecNumber>
    </recommendedName>
    <alternativeName>
        <fullName evidence="1">N6-L-threonylcarbamoyladenine synthase</fullName>
        <shortName evidence="1">t(6)A synthase</shortName>
    </alternativeName>
    <alternativeName>
        <fullName evidence="1">t(6)A37 threonylcarbamoyladenosine biosynthesis protein TsaD</fullName>
    </alternativeName>
    <alternativeName>
        <fullName evidence="1">tRNA threonylcarbamoyladenosine biosynthesis protein TsaD</fullName>
    </alternativeName>
</protein>
<dbReference type="EC" id="2.3.1.234" evidence="1"/>
<dbReference type="EMBL" id="CP000096">
    <property type="protein sequence ID" value="ABB23048.1"/>
    <property type="molecule type" value="Genomic_DNA"/>
</dbReference>
<dbReference type="RefSeq" id="WP_011356924.1">
    <property type="nucleotide sequence ID" value="NC_007512.1"/>
</dbReference>
<dbReference type="SMR" id="Q3B6I3"/>
<dbReference type="STRING" id="319225.Plut_0158"/>
<dbReference type="KEGG" id="plt:Plut_0158"/>
<dbReference type="eggNOG" id="COG0533">
    <property type="taxonomic scope" value="Bacteria"/>
</dbReference>
<dbReference type="HOGENOM" id="CLU_023208_0_2_10"/>
<dbReference type="OrthoDB" id="9806197at2"/>
<dbReference type="Proteomes" id="UP000002709">
    <property type="component" value="Chromosome"/>
</dbReference>
<dbReference type="GO" id="GO:0005737">
    <property type="term" value="C:cytoplasm"/>
    <property type="evidence" value="ECO:0007669"/>
    <property type="project" value="UniProtKB-SubCell"/>
</dbReference>
<dbReference type="GO" id="GO:0005506">
    <property type="term" value="F:iron ion binding"/>
    <property type="evidence" value="ECO:0007669"/>
    <property type="project" value="UniProtKB-UniRule"/>
</dbReference>
<dbReference type="GO" id="GO:0061711">
    <property type="term" value="F:N(6)-L-threonylcarbamoyladenine synthase activity"/>
    <property type="evidence" value="ECO:0007669"/>
    <property type="project" value="UniProtKB-EC"/>
</dbReference>
<dbReference type="GO" id="GO:0002949">
    <property type="term" value="P:tRNA threonylcarbamoyladenosine modification"/>
    <property type="evidence" value="ECO:0007669"/>
    <property type="project" value="UniProtKB-UniRule"/>
</dbReference>
<dbReference type="CDD" id="cd24133">
    <property type="entry name" value="ASKHA_NBD_TsaD_bac"/>
    <property type="match status" value="1"/>
</dbReference>
<dbReference type="FunFam" id="3.30.420.40:FF:000012">
    <property type="entry name" value="tRNA N6-adenosine threonylcarbamoyltransferase"/>
    <property type="match status" value="1"/>
</dbReference>
<dbReference type="FunFam" id="3.30.420.40:FF:000040">
    <property type="entry name" value="tRNA N6-adenosine threonylcarbamoyltransferase"/>
    <property type="match status" value="1"/>
</dbReference>
<dbReference type="Gene3D" id="3.30.420.40">
    <property type="match status" value="2"/>
</dbReference>
<dbReference type="HAMAP" id="MF_01445">
    <property type="entry name" value="TsaD"/>
    <property type="match status" value="1"/>
</dbReference>
<dbReference type="InterPro" id="IPR043129">
    <property type="entry name" value="ATPase_NBD"/>
</dbReference>
<dbReference type="InterPro" id="IPR000905">
    <property type="entry name" value="Gcp-like_dom"/>
</dbReference>
<dbReference type="InterPro" id="IPR017861">
    <property type="entry name" value="KAE1/TsaD"/>
</dbReference>
<dbReference type="InterPro" id="IPR022450">
    <property type="entry name" value="TsaD"/>
</dbReference>
<dbReference type="NCBIfam" id="TIGR00329">
    <property type="entry name" value="gcp_kae1"/>
    <property type="match status" value="1"/>
</dbReference>
<dbReference type="NCBIfam" id="TIGR03723">
    <property type="entry name" value="T6A_TsaD_YgjD"/>
    <property type="match status" value="1"/>
</dbReference>
<dbReference type="PANTHER" id="PTHR11735">
    <property type="entry name" value="TRNA N6-ADENOSINE THREONYLCARBAMOYLTRANSFERASE"/>
    <property type="match status" value="1"/>
</dbReference>
<dbReference type="PANTHER" id="PTHR11735:SF6">
    <property type="entry name" value="TRNA N6-ADENOSINE THREONYLCARBAMOYLTRANSFERASE, MITOCHONDRIAL"/>
    <property type="match status" value="1"/>
</dbReference>
<dbReference type="Pfam" id="PF00814">
    <property type="entry name" value="TsaD"/>
    <property type="match status" value="1"/>
</dbReference>
<dbReference type="PRINTS" id="PR00789">
    <property type="entry name" value="OSIALOPTASE"/>
</dbReference>
<dbReference type="SUPFAM" id="SSF53067">
    <property type="entry name" value="Actin-like ATPase domain"/>
    <property type="match status" value="1"/>
</dbReference>
<sequence length="348" mass="36675">MIILGLETSCDETSGAVLVDGEVRSNVVSSQLCHKGFGGVVPELASREHERLIVPITEAALAEANITKKDIDVIAATAGPGLIGAVMVGLSFAQSMAWALGVPFVAVNHVEAHMFSPFIDQETAGGGPIGPFISLTVSGGHTLLAIVREDLTYRIIGRTLDDAAGEAFDKTGKMLGLPYPAGPAIDRLAKEGDAGFHRFPRALTSQSQTSRSYRDNFDFSFSGLKTSVLTWLRSQKEEFIHEHRADIAASIQDAIVGVLVEKAVGAARRHNIGAIAVAGGVSANSELRRAMDAACRKHGIALFIPSATYSTDNAAMIATLAGLKLSRGLQPLCRYDTAPFASFSAAGN</sequence>
<comment type="function">
    <text evidence="1">Required for the formation of a threonylcarbamoyl group on adenosine at position 37 (t(6)A37) in tRNAs that read codons beginning with adenine. Is involved in the transfer of the threonylcarbamoyl moiety of threonylcarbamoyl-AMP (TC-AMP) to the N6 group of A37, together with TsaE and TsaB. TsaD likely plays a direct catalytic role in this reaction.</text>
</comment>
<comment type="catalytic activity">
    <reaction evidence="1">
        <text>L-threonylcarbamoyladenylate + adenosine(37) in tRNA = N(6)-L-threonylcarbamoyladenosine(37) in tRNA + AMP + H(+)</text>
        <dbReference type="Rhea" id="RHEA:37059"/>
        <dbReference type="Rhea" id="RHEA-COMP:10162"/>
        <dbReference type="Rhea" id="RHEA-COMP:10163"/>
        <dbReference type="ChEBI" id="CHEBI:15378"/>
        <dbReference type="ChEBI" id="CHEBI:73682"/>
        <dbReference type="ChEBI" id="CHEBI:74411"/>
        <dbReference type="ChEBI" id="CHEBI:74418"/>
        <dbReference type="ChEBI" id="CHEBI:456215"/>
        <dbReference type="EC" id="2.3.1.234"/>
    </reaction>
</comment>
<comment type="cofactor">
    <cofactor evidence="1">
        <name>Fe(2+)</name>
        <dbReference type="ChEBI" id="CHEBI:29033"/>
    </cofactor>
    <text evidence="1">Binds 1 Fe(2+) ion per subunit.</text>
</comment>
<comment type="subcellular location">
    <subcellularLocation>
        <location evidence="1">Cytoplasm</location>
    </subcellularLocation>
</comment>
<comment type="similarity">
    <text evidence="1">Belongs to the KAE1 / TsaD family.</text>
</comment>
<accession>Q3B6I3</accession>
<feature type="chain" id="PRO_0000303471" description="tRNA N6-adenosine threonylcarbamoyltransferase">
    <location>
        <begin position="1"/>
        <end position="348"/>
    </location>
</feature>
<feature type="binding site" evidence="1">
    <location>
        <position position="109"/>
    </location>
    <ligand>
        <name>Fe cation</name>
        <dbReference type="ChEBI" id="CHEBI:24875"/>
    </ligand>
</feature>
<feature type="binding site" evidence="1">
    <location>
        <position position="113"/>
    </location>
    <ligand>
        <name>Fe cation</name>
        <dbReference type="ChEBI" id="CHEBI:24875"/>
    </ligand>
</feature>
<feature type="binding site" evidence="1">
    <location>
        <begin position="136"/>
        <end position="140"/>
    </location>
    <ligand>
        <name>substrate</name>
    </ligand>
</feature>
<feature type="binding site" evidence="1">
    <location>
        <position position="169"/>
    </location>
    <ligand>
        <name>substrate</name>
    </ligand>
</feature>
<feature type="binding site" evidence="1">
    <location>
        <position position="182"/>
    </location>
    <ligand>
        <name>substrate</name>
    </ligand>
</feature>
<feature type="binding site" evidence="1">
    <location>
        <position position="186"/>
    </location>
    <ligand>
        <name>substrate</name>
    </ligand>
</feature>
<feature type="binding site" evidence="1">
    <location>
        <position position="284"/>
    </location>
    <ligand>
        <name>substrate</name>
    </ligand>
</feature>
<feature type="binding site" evidence="1">
    <location>
        <position position="312"/>
    </location>
    <ligand>
        <name>Fe cation</name>
        <dbReference type="ChEBI" id="CHEBI:24875"/>
    </ligand>
</feature>
<gene>
    <name evidence="1" type="primary">tsaD</name>
    <name type="synonym">gcp</name>
    <name type="ordered locus">Plut_0158</name>
</gene>
<reference key="1">
    <citation type="submission" date="2005-08" db="EMBL/GenBank/DDBJ databases">
        <title>Complete sequence of Pelodictyon luteolum DSM 273.</title>
        <authorList>
            <consortium name="US DOE Joint Genome Institute"/>
            <person name="Copeland A."/>
            <person name="Lucas S."/>
            <person name="Lapidus A."/>
            <person name="Barry K."/>
            <person name="Detter J.C."/>
            <person name="Glavina T."/>
            <person name="Hammon N."/>
            <person name="Israni S."/>
            <person name="Pitluck S."/>
            <person name="Bryant D."/>
            <person name="Schmutz J."/>
            <person name="Larimer F."/>
            <person name="Land M."/>
            <person name="Kyrpides N."/>
            <person name="Ivanova N."/>
            <person name="Richardson P."/>
        </authorList>
    </citation>
    <scope>NUCLEOTIDE SEQUENCE [LARGE SCALE GENOMIC DNA]</scope>
    <source>
        <strain>DSM 273 / BCRC 81028 / 2530</strain>
    </source>
</reference>
<proteinExistence type="inferred from homology"/>
<keyword id="KW-0012">Acyltransferase</keyword>
<keyword id="KW-0963">Cytoplasm</keyword>
<keyword id="KW-0408">Iron</keyword>
<keyword id="KW-0479">Metal-binding</keyword>
<keyword id="KW-1185">Reference proteome</keyword>
<keyword id="KW-0808">Transferase</keyword>
<keyword id="KW-0819">tRNA processing</keyword>
<evidence type="ECO:0000255" key="1">
    <source>
        <dbReference type="HAMAP-Rule" id="MF_01445"/>
    </source>
</evidence>